<proteinExistence type="inferred from homology"/>
<gene>
    <name evidence="1" type="primary">folD2</name>
    <name type="ordered locus">ACIAD2847</name>
</gene>
<protein>
    <recommendedName>
        <fullName evidence="1">Bifunctional protein FolD 2</fullName>
    </recommendedName>
    <domain>
        <recommendedName>
            <fullName evidence="1">Methylenetetrahydrofolate dehydrogenase</fullName>
            <ecNumber evidence="1">1.5.1.5</ecNumber>
        </recommendedName>
    </domain>
    <domain>
        <recommendedName>
            <fullName evidence="1">Methenyltetrahydrofolate cyclohydrolase</fullName>
            <ecNumber evidence="1">3.5.4.9</ecNumber>
        </recommendedName>
    </domain>
</protein>
<sequence length="282" mass="29540">MALVLDGRALAKKIEADLLVRVEALKAKSGRTPILATILVGDDGASATYVRMKGNACRRVGMDSLKIELSQETTTEQLLAEIEKLNANPDVHGILLQHPVPAQIDERACFDAISLAKDVDGVTCLGYGRMAMGEAAYGSATPAGIMTILKENNIEIAGKHAVVVGRSAILGKPMAAMLLEANATVTICHSRTQNLAEFVKQADIIVGAVGKAELIQKDWIKPGAVVVDAGFHPRDGGGVGDIQLQGIEDVASAYTPVPGGVGPMTITTLIRQTVEAAEKALA</sequence>
<keyword id="KW-0028">Amino-acid biosynthesis</keyword>
<keyword id="KW-0368">Histidine biosynthesis</keyword>
<keyword id="KW-0378">Hydrolase</keyword>
<keyword id="KW-0486">Methionine biosynthesis</keyword>
<keyword id="KW-0511">Multifunctional enzyme</keyword>
<keyword id="KW-0521">NADP</keyword>
<keyword id="KW-0554">One-carbon metabolism</keyword>
<keyword id="KW-0560">Oxidoreductase</keyword>
<keyword id="KW-0658">Purine biosynthesis</keyword>
<evidence type="ECO:0000255" key="1">
    <source>
        <dbReference type="HAMAP-Rule" id="MF_01576"/>
    </source>
</evidence>
<feature type="chain" id="PRO_0000268253" description="Bifunctional protein FolD 2">
    <location>
        <begin position="1"/>
        <end position="282"/>
    </location>
</feature>
<feature type="binding site" evidence="1">
    <location>
        <begin position="165"/>
        <end position="167"/>
    </location>
    <ligand>
        <name>NADP(+)</name>
        <dbReference type="ChEBI" id="CHEBI:58349"/>
    </ligand>
</feature>
<feature type="binding site" evidence="1">
    <location>
        <position position="190"/>
    </location>
    <ligand>
        <name>NADP(+)</name>
        <dbReference type="ChEBI" id="CHEBI:58349"/>
    </ligand>
</feature>
<comment type="function">
    <text evidence="1">Catalyzes the oxidation of 5,10-methylenetetrahydrofolate to 5,10-methenyltetrahydrofolate and then the hydrolysis of 5,10-methenyltetrahydrofolate to 10-formyltetrahydrofolate.</text>
</comment>
<comment type="catalytic activity">
    <reaction evidence="1">
        <text>(6R)-5,10-methylene-5,6,7,8-tetrahydrofolate + NADP(+) = (6R)-5,10-methenyltetrahydrofolate + NADPH</text>
        <dbReference type="Rhea" id="RHEA:22812"/>
        <dbReference type="ChEBI" id="CHEBI:15636"/>
        <dbReference type="ChEBI" id="CHEBI:57455"/>
        <dbReference type="ChEBI" id="CHEBI:57783"/>
        <dbReference type="ChEBI" id="CHEBI:58349"/>
        <dbReference type="EC" id="1.5.1.5"/>
    </reaction>
</comment>
<comment type="catalytic activity">
    <reaction evidence="1">
        <text>(6R)-5,10-methenyltetrahydrofolate + H2O = (6R)-10-formyltetrahydrofolate + H(+)</text>
        <dbReference type="Rhea" id="RHEA:23700"/>
        <dbReference type="ChEBI" id="CHEBI:15377"/>
        <dbReference type="ChEBI" id="CHEBI:15378"/>
        <dbReference type="ChEBI" id="CHEBI:57455"/>
        <dbReference type="ChEBI" id="CHEBI:195366"/>
        <dbReference type="EC" id="3.5.4.9"/>
    </reaction>
</comment>
<comment type="pathway">
    <text evidence="1">One-carbon metabolism; tetrahydrofolate interconversion.</text>
</comment>
<comment type="subunit">
    <text evidence="1">Homodimer.</text>
</comment>
<comment type="similarity">
    <text evidence="1">Belongs to the tetrahydrofolate dehydrogenase/cyclohydrolase family.</text>
</comment>
<organism>
    <name type="scientific">Acinetobacter baylyi (strain ATCC 33305 / BD413 / ADP1)</name>
    <dbReference type="NCBI Taxonomy" id="62977"/>
    <lineage>
        <taxon>Bacteria</taxon>
        <taxon>Pseudomonadati</taxon>
        <taxon>Pseudomonadota</taxon>
        <taxon>Gammaproteobacteria</taxon>
        <taxon>Moraxellales</taxon>
        <taxon>Moraxellaceae</taxon>
        <taxon>Acinetobacter</taxon>
    </lineage>
</organism>
<accession>Q6F8N7</accession>
<dbReference type="EC" id="1.5.1.5" evidence="1"/>
<dbReference type="EC" id="3.5.4.9" evidence="1"/>
<dbReference type="EMBL" id="CR543861">
    <property type="protein sequence ID" value="CAG69578.1"/>
    <property type="molecule type" value="Genomic_DNA"/>
</dbReference>
<dbReference type="SMR" id="Q6F8N7"/>
<dbReference type="STRING" id="202950.GCA_001485005_03031"/>
<dbReference type="GeneID" id="45235083"/>
<dbReference type="KEGG" id="aci:ACIAD2847"/>
<dbReference type="eggNOG" id="COG0190">
    <property type="taxonomic scope" value="Bacteria"/>
</dbReference>
<dbReference type="HOGENOM" id="CLU_034045_2_1_6"/>
<dbReference type="OrthoDB" id="9803580at2"/>
<dbReference type="BioCyc" id="ASP62977:ACIAD_RS12840-MONOMER"/>
<dbReference type="UniPathway" id="UPA00193"/>
<dbReference type="Proteomes" id="UP000000430">
    <property type="component" value="Chromosome"/>
</dbReference>
<dbReference type="GO" id="GO:0005829">
    <property type="term" value="C:cytosol"/>
    <property type="evidence" value="ECO:0007669"/>
    <property type="project" value="TreeGrafter"/>
</dbReference>
<dbReference type="GO" id="GO:0004477">
    <property type="term" value="F:methenyltetrahydrofolate cyclohydrolase activity"/>
    <property type="evidence" value="ECO:0007669"/>
    <property type="project" value="UniProtKB-UniRule"/>
</dbReference>
<dbReference type="GO" id="GO:0004488">
    <property type="term" value="F:methylenetetrahydrofolate dehydrogenase (NADP+) activity"/>
    <property type="evidence" value="ECO:0007669"/>
    <property type="project" value="UniProtKB-UniRule"/>
</dbReference>
<dbReference type="GO" id="GO:0000105">
    <property type="term" value="P:L-histidine biosynthetic process"/>
    <property type="evidence" value="ECO:0007669"/>
    <property type="project" value="UniProtKB-KW"/>
</dbReference>
<dbReference type="GO" id="GO:0009086">
    <property type="term" value="P:methionine biosynthetic process"/>
    <property type="evidence" value="ECO:0007669"/>
    <property type="project" value="UniProtKB-KW"/>
</dbReference>
<dbReference type="GO" id="GO:0006164">
    <property type="term" value="P:purine nucleotide biosynthetic process"/>
    <property type="evidence" value="ECO:0007669"/>
    <property type="project" value="UniProtKB-KW"/>
</dbReference>
<dbReference type="GO" id="GO:0035999">
    <property type="term" value="P:tetrahydrofolate interconversion"/>
    <property type="evidence" value="ECO:0007669"/>
    <property type="project" value="UniProtKB-UniRule"/>
</dbReference>
<dbReference type="CDD" id="cd01080">
    <property type="entry name" value="NAD_bind_m-THF_DH_Cyclohyd"/>
    <property type="match status" value="1"/>
</dbReference>
<dbReference type="FunFam" id="3.40.50.720:FF:000094">
    <property type="entry name" value="Bifunctional protein FolD"/>
    <property type="match status" value="1"/>
</dbReference>
<dbReference type="FunFam" id="3.40.50.10860:FF:000005">
    <property type="entry name" value="C-1-tetrahydrofolate synthase, cytoplasmic, putative"/>
    <property type="match status" value="1"/>
</dbReference>
<dbReference type="Gene3D" id="3.40.50.10860">
    <property type="entry name" value="Leucine Dehydrogenase, chain A, domain 1"/>
    <property type="match status" value="1"/>
</dbReference>
<dbReference type="Gene3D" id="3.40.50.720">
    <property type="entry name" value="NAD(P)-binding Rossmann-like Domain"/>
    <property type="match status" value="1"/>
</dbReference>
<dbReference type="HAMAP" id="MF_01576">
    <property type="entry name" value="THF_DHG_CYH"/>
    <property type="match status" value="1"/>
</dbReference>
<dbReference type="InterPro" id="IPR046346">
    <property type="entry name" value="Aminoacid_DH-like_N_sf"/>
</dbReference>
<dbReference type="InterPro" id="IPR036291">
    <property type="entry name" value="NAD(P)-bd_dom_sf"/>
</dbReference>
<dbReference type="InterPro" id="IPR000672">
    <property type="entry name" value="THF_DH/CycHdrlase"/>
</dbReference>
<dbReference type="InterPro" id="IPR020630">
    <property type="entry name" value="THF_DH/CycHdrlase_cat_dom"/>
</dbReference>
<dbReference type="InterPro" id="IPR020867">
    <property type="entry name" value="THF_DH/CycHdrlase_CS"/>
</dbReference>
<dbReference type="InterPro" id="IPR020631">
    <property type="entry name" value="THF_DH/CycHdrlase_NAD-bd_dom"/>
</dbReference>
<dbReference type="NCBIfam" id="NF010788">
    <property type="entry name" value="PRK14192.1"/>
    <property type="match status" value="1"/>
</dbReference>
<dbReference type="PANTHER" id="PTHR48099:SF5">
    <property type="entry name" value="C-1-TETRAHYDROFOLATE SYNTHASE, CYTOPLASMIC"/>
    <property type="match status" value="1"/>
</dbReference>
<dbReference type="PANTHER" id="PTHR48099">
    <property type="entry name" value="C-1-TETRAHYDROFOLATE SYNTHASE, CYTOPLASMIC-RELATED"/>
    <property type="match status" value="1"/>
</dbReference>
<dbReference type="Pfam" id="PF00763">
    <property type="entry name" value="THF_DHG_CYH"/>
    <property type="match status" value="1"/>
</dbReference>
<dbReference type="Pfam" id="PF02882">
    <property type="entry name" value="THF_DHG_CYH_C"/>
    <property type="match status" value="1"/>
</dbReference>
<dbReference type="PRINTS" id="PR00085">
    <property type="entry name" value="THFDHDRGNASE"/>
</dbReference>
<dbReference type="SUPFAM" id="SSF53223">
    <property type="entry name" value="Aminoacid dehydrogenase-like, N-terminal domain"/>
    <property type="match status" value="1"/>
</dbReference>
<dbReference type="SUPFAM" id="SSF51735">
    <property type="entry name" value="NAD(P)-binding Rossmann-fold domains"/>
    <property type="match status" value="1"/>
</dbReference>
<dbReference type="PROSITE" id="PS00767">
    <property type="entry name" value="THF_DHG_CYH_2"/>
    <property type="match status" value="1"/>
</dbReference>
<name>FOLD2_ACIAD</name>
<reference key="1">
    <citation type="journal article" date="2004" name="Nucleic Acids Res.">
        <title>Unique features revealed by the genome sequence of Acinetobacter sp. ADP1, a versatile and naturally transformation competent bacterium.</title>
        <authorList>
            <person name="Barbe V."/>
            <person name="Vallenet D."/>
            <person name="Fonknechten N."/>
            <person name="Kreimeyer A."/>
            <person name="Oztas S."/>
            <person name="Labarre L."/>
            <person name="Cruveiller S."/>
            <person name="Robert C."/>
            <person name="Duprat S."/>
            <person name="Wincker P."/>
            <person name="Ornston L.N."/>
            <person name="Weissenbach J."/>
            <person name="Marliere P."/>
            <person name="Cohen G.N."/>
            <person name="Medigue C."/>
        </authorList>
    </citation>
    <scope>NUCLEOTIDE SEQUENCE [LARGE SCALE GENOMIC DNA]</scope>
    <source>
        <strain>ATCC 33305 / BD413 / ADP1</strain>
    </source>
</reference>